<name>SUCC_ACIBC</name>
<proteinExistence type="inferred from homology"/>
<keyword id="KW-0067">ATP-binding</keyword>
<keyword id="KW-0436">Ligase</keyword>
<keyword id="KW-0460">Magnesium</keyword>
<keyword id="KW-0479">Metal-binding</keyword>
<keyword id="KW-0547">Nucleotide-binding</keyword>
<keyword id="KW-0816">Tricarboxylic acid cycle</keyword>
<reference key="1">
    <citation type="journal article" date="2008" name="Antimicrob. Agents Chemother.">
        <title>Whole-genome pyrosequencing of an epidemic multidrug-resistant Acinetobacter baumannii strain belonging to the European clone II group.</title>
        <authorList>
            <person name="Iacono M."/>
            <person name="Villa L."/>
            <person name="Fortini D."/>
            <person name="Bordoni R."/>
            <person name="Imperi F."/>
            <person name="Bonnal R.J."/>
            <person name="Sicheritz-Ponten T."/>
            <person name="De Bellis G."/>
            <person name="Visca P."/>
            <person name="Cassone A."/>
            <person name="Carattoli A."/>
        </authorList>
    </citation>
    <scope>NUCLEOTIDE SEQUENCE [LARGE SCALE GENOMIC DNA]</scope>
    <source>
        <strain>ACICU</strain>
    </source>
</reference>
<dbReference type="EC" id="6.2.1.5" evidence="1"/>
<dbReference type="EMBL" id="CP000863">
    <property type="protein sequence ID" value="ACC58264.1"/>
    <property type="molecule type" value="Genomic_DNA"/>
</dbReference>
<dbReference type="RefSeq" id="WP_001048573.1">
    <property type="nucleotide sequence ID" value="NZ_CP031380.1"/>
</dbReference>
<dbReference type="SMR" id="B2HXG0"/>
<dbReference type="GeneID" id="92894978"/>
<dbReference type="KEGG" id="abc:ACICU_02952"/>
<dbReference type="HOGENOM" id="CLU_037430_0_2_6"/>
<dbReference type="UniPathway" id="UPA00223">
    <property type="reaction ID" value="UER00999"/>
</dbReference>
<dbReference type="Proteomes" id="UP000008839">
    <property type="component" value="Chromosome"/>
</dbReference>
<dbReference type="GO" id="GO:0005829">
    <property type="term" value="C:cytosol"/>
    <property type="evidence" value="ECO:0007669"/>
    <property type="project" value="TreeGrafter"/>
</dbReference>
<dbReference type="GO" id="GO:0042709">
    <property type="term" value="C:succinate-CoA ligase complex"/>
    <property type="evidence" value="ECO:0007669"/>
    <property type="project" value="TreeGrafter"/>
</dbReference>
<dbReference type="GO" id="GO:0005524">
    <property type="term" value="F:ATP binding"/>
    <property type="evidence" value="ECO:0007669"/>
    <property type="project" value="UniProtKB-UniRule"/>
</dbReference>
<dbReference type="GO" id="GO:0000287">
    <property type="term" value="F:magnesium ion binding"/>
    <property type="evidence" value="ECO:0007669"/>
    <property type="project" value="UniProtKB-UniRule"/>
</dbReference>
<dbReference type="GO" id="GO:0004775">
    <property type="term" value="F:succinate-CoA ligase (ADP-forming) activity"/>
    <property type="evidence" value="ECO:0007669"/>
    <property type="project" value="UniProtKB-UniRule"/>
</dbReference>
<dbReference type="GO" id="GO:0004776">
    <property type="term" value="F:succinate-CoA ligase (GDP-forming) activity"/>
    <property type="evidence" value="ECO:0007669"/>
    <property type="project" value="RHEA"/>
</dbReference>
<dbReference type="GO" id="GO:0006104">
    <property type="term" value="P:succinyl-CoA metabolic process"/>
    <property type="evidence" value="ECO:0007669"/>
    <property type="project" value="TreeGrafter"/>
</dbReference>
<dbReference type="GO" id="GO:0006099">
    <property type="term" value="P:tricarboxylic acid cycle"/>
    <property type="evidence" value="ECO:0007669"/>
    <property type="project" value="UniProtKB-UniRule"/>
</dbReference>
<dbReference type="FunFam" id="3.30.1490.20:FF:000002">
    <property type="entry name" value="Succinate--CoA ligase [ADP-forming] subunit beta"/>
    <property type="match status" value="1"/>
</dbReference>
<dbReference type="FunFam" id="3.30.470.20:FF:000002">
    <property type="entry name" value="Succinate--CoA ligase [ADP-forming] subunit beta"/>
    <property type="match status" value="1"/>
</dbReference>
<dbReference type="FunFam" id="3.40.50.261:FF:000001">
    <property type="entry name" value="Succinate--CoA ligase [ADP-forming] subunit beta"/>
    <property type="match status" value="1"/>
</dbReference>
<dbReference type="Gene3D" id="3.30.1490.20">
    <property type="entry name" value="ATP-grasp fold, A domain"/>
    <property type="match status" value="1"/>
</dbReference>
<dbReference type="Gene3D" id="3.30.470.20">
    <property type="entry name" value="ATP-grasp fold, B domain"/>
    <property type="match status" value="1"/>
</dbReference>
<dbReference type="Gene3D" id="3.40.50.261">
    <property type="entry name" value="Succinyl-CoA synthetase domains"/>
    <property type="match status" value="1"/>
</dbReference>
<dbReference type="HAMAP" id="MF_00558">
    <property type="entry name" value="Succ_CoA_beta"/>
    <property type="match status" value="1"/>
</dbReference>
<dbReference type="InterPro" id="IPR011761">
    <property type="entry name" value="ATP-grasp"/>
</dbReference>
<dbReference type="InterPro" id="IPR013650">
    <property type="entry name" value="ATP-grasp_succ-CoA_synth-type"/>
</dbReference>
<dbReference type="InterPro" id="IPR013815">
    <property type="entry name" value="ATP_grasp_subdomain_1"/>
</dbReference>
<dbReference type="InterPro" id="IPR017866">
    <property type="entry name" value="Succ-CoA_synthase_bsu_CS"/>
</dbReference>
<dbReference type="InterPro" id="IPR005811">
    <property type="entry name" value="SUCC_ACL_C"/>
</dbReference>
<dbReference type="InterPro" id="IPR005809">
    <property type="entry name" value="Succ_CoA_ligase-like_bsu"/>
</dbReference>
<dbReference type="InterPro" id="IPR016102">
    <property type="entry name" value="Succinyl-CoA_synth-like"/>
</dbReference>
<dbReference type="NCBIfam" id="NF001913">
    <property type="entry name" value="PRK00696.1"/>
    <property type="match status" value="1"/>
</dbReference>
<dbReference type="NCBIfam" id="TIGR01016">
    <property type="entry name" value="sucCoAbeta"/>
    <property type="match status" value="1"/>
</dbReference>
<dbReference type="PANTHER" id="PTHR11815:SF10">
    <property type="entry name" value="SUCCINATE--COA LIGASE [GDP-FORMING] SUBUNIT BETA, MITOCHONDRIAL"/>
    <property type="match status" value="1"/>
</dbReference>
<dbReference type="PANTHER" id="PTHR11815">
    <property type="entry name" value="SUCCINYL-COA SYNTHETASE BETA CHAIN"/>
    <property type="match status" value="1"/>
</dbReference>
<dbReference type="Pfam" id="PF08442">
    <property type="entry name" value="ATP-grasp_2"/>
    <property type="match status" value="1"/>
</dbReference>
<dbReference type="Pfam" id="PF00549">
    <property type="entry name" value="Ligase_CoA"/>
    <property type="match status" value="1"/>
</dbReference>
<dbReference type="PIRSF" id="PIRSF001554">
    <property type="entry name" value="SucCS_beta"/>
    <property type="match status" value="1"/>
</dbReference>
<dbReference type="SUPFAM" id="SSF56059">
    <property type="entry name" value="Glutathione synthetase ATP-binding domain-like"/>
    <property type="match status" value="1"/>
</dbReference>
<dbReference type="SUPFAM" id="SSF52210">
    <property type="entry name" value="Succinyl-CoA synthetase domains"/>
    <property type="match status" value="1"/>
</dbReference>
<dbReference type="PROSITE" id="PS50975">
    <property type="entry name" value="ATP_GRASP"/>
    <property type="match status" value="1"/>
</dbReference>
<dbReference type="PROSITE" id="PS01217">
    <property type="entry name" value="SUCCINYL_COA_LIG_3"/>
    <property type="match status" value="1"/>
</dbReference>
<sequence length="388" mass="41530">MNLHEYQAKALLKEYGMPVQEGILATNADEAVAAFEQLGGKFAVMKAQVHAGGRGKAGGVKVAKSKEDVIEFANNIIGTRLVTYQTDANGQPVNSIIVAEDVYPVERELYLGAVVDRSSRRITFMASTEGGVEIEKVAEETPEKIIKVEVDPLVGLQPFQAREVAFALGLKDKQIGQFVKIMTAAYQAFVENDFALFEINPLSVRENGEILCVDAKVGIDSNALYRLPKVAALRDKSQENERELKASEFDLNYVALEGNIGCMVNGAGLAMATMDIIKLYGGQPANFLDVGGGATKERVIEAFKIILADTSVQGVLINIFGGIVRCDMIAEAIIAAVQEVNVTVPVVVRLEGNNAELGAKLLDESGLKLISANGLSDAAEKVVAAVKA</sequence>
<feature type="chain" id="PRO_1000129147" description="Succinate--CoA ligase [ADP-forming] subunit beta">
    <location>
        <begin position="1"/>
        <end position="388"/>
    </location>
</feature>
<feature type="domain" description="ATP-grasp" evidence="1">
    <location>
        <begin position="9"/>
        <end position="245"/>
    </location>
</feature>
<feature type="binding site" evidence="1">
    <location>
        <position position="46"/>
    </location>
    <ligand>
        <name>ATP</name>
        <dbReference type="ChEBI" id="CHEBI:30616"/>
    </ligand>
</feature>
<feature type="binding site" evidence="1">
    <location>
        <begin position="53"/>
        <end position="55"/>
    </location>
    <ligand>
        <name>ATP</name>
        <dbReference type="ChEBI" id="CHEBI:30616"/>
    </ligand>
</feature>
<feature type="binding site" evidence="1">
    <location>
        <position position="100"/>
    </location>
    <ligand>
        <name>ATP</name>
        <dbReference type="ChEBI" id="CHEBI:30616"/>
    </ligand>
</feature>
<feature type="binding site" evidence="1">
    <location>
        <position position="103"/>
    </location>
    <ligand>
        <name>ATP</name>
        <dbReference type="ChEBI" id="CHEBI:30616"/>
    </ligand>
</feature>
<feature type="binding site" evidence="1">
    <location>
        <position position="108"/>
    </location>
    <ligand>
        <name>ATP</name>
        <dbReference type="ChEBI" id="CHEBI:30616"/>
    </ligand>
</feature>
<feature type="binding site" evidence="1">
    <location>
        <position position="200"/>
    </location>
    <ligand>
        <name>Mg(2+)</name>
        <dbReference type="ChEBI" id="CHEBI:18420"/>
    </ligand>
</feature>
<feature type="binding site" evidence="1">
    <location>
        <position position="214"/>
    </location>
    <ligand>
        <name>Mg(2+)</name>
        <dbReference type="ChEBI" id="CHEBI:18420"/>
    </ligand>
</feature>
<feature type="binding site" evidence="1">
    <location>
        <position position="265"/>
    </location>
    <ligand>
        <name>substrate</name>
        <note>ligand shared with subunit alpha</note>
    </ligand>
</feature>
<feature type="binding site" evidence="1">
    <location>
        <begin position="322"/>
        <end position="324"/>
    </location>
    <ligand>
        <name>substrate</name>
        <note>ligand shared with subunit alpha</note>
    </ligand>
</feature>
<gene>
    <name evidence="1" type="primary">sucC</name>
    <name type="ordered locus">ACICU_02952</name>
</gene>
<protein>
    <recommendedName>
        <fullName evidence="1">Succinate--CoA ligase [ADP-forming] subunit beta</fullName>
        <ecNumber evidence="1">6.2.1.5</ecNumber>
    </recommendedName>
    <alternativeName>
        <fullName evidence="1">Succinyl-CoA synthetase subunit beta</fullName>
        <shortName evidence="1">SCS-beta</shortName>
    </alternativeName>
</protein>
<evidence type="ECO:0000255" key="1">
    <source>
        <dbReference type="HAMAP-Rule" id="MF_00558"/>
    </source>
</evidence>
<organism>
    <name type="scientific">Acinetobacter baumannii (strain ACICU)</name>
    <dbReference type="NCBI Taxonomy" id="405416"/>
    <lineage>
        <taxon>Bacteria</taxon>
        <taxon>Pseudomonadati</taxon>
        <taxon>Pseudomonadota</taxon>
        <taxon>Gammaproteobacteria</taxon>
        <taxon>Moraxellales</taxon>
        <taxon>Moraxellaceae</taxon>
        <taxon>Acinetobacter</taxon>
        <taxon>Acinetobacter calcoaceticus/baumannii complex</taxon>
    </lineage>
</organism>
<comment type="function">
    <text evidence="1">Succinyl-CoA synthetase functions in the citric acid cycle (TCA), coupling the hydrolysis of succinyl-CoA to the synthesis of either ATP or GTP and thus represents the only step of substrate-level phosphorylation in the TCA. The beta subunit provides nucleotide specificity of the enzyme and binds the substrate succinate, while the binding sites for coenzyme A and phosphate are found in the alpha subunit.</text>
</comment>
<comment type="catalytic activity">
    <reaction evidence="1">
        <text>succinate + ATP + CoA = succinyl-CoA + ADP + phosphate</text>
        <dbReference type="Rhea" id="RHEA:17661"/>
        <dbReference type="ChEBI" id="CHEBI:30031"/>
        <dbReference type="ChEBI" id="CHEBI:30616"/>
        <dbReference type="ChEBI" id="CHEBI:43474"/>
        <dbReference type="ChEBI" id="CHEBI:57287"/>
        <dbReference type="ChEBI" id="CHEBI:57292"/>
        <dbReference type="ChEBI" id="CHEBI:456216"/>
        <dbReference type="EC" id="6.2.1.5"/>
    </reaction>
    <physiologicalReaction direction="right-to-left" evidence="1">
        <dbReference type="Rhea" id="RHEA:17663"/>
    </physiologicalReaction>
</comment>
<comment type="catalytic activity">
    <reaction evidence="1">
        <text>GTP + succinate + CoA = succinyl-CoA + GDP + phosphate</text>
        <dbReference type="Rhea" id="RHEA:22120"/>
        <dbReference type="ChEBI" id="CHEBI:30031"/>
        <dbReference type="ChEBI" id="CHEBI:37565"/>
        <dbReference type="ChEBI" id="CHEBI:43474"/>
        <dbReference type="ChEBI" id="CHEBI:57287"/>
        <dbReference type="ChEBI" id="CHEBI:57292"/>
        <dbReference type="ChEBI" id="CHEBI:58189"/>
    </reaction>
    <physiologicalReaction direction="right-to-left" evidence="1">
        <dbReference type="Rhea" id="RHEA:22122"/>
    </physiologicalReaction>
</comment>
<comment type="cofactor">
    <cofactor evidence="1">
        <name>Mg(2+)</name>
        <dbReference type="ChEBI" id="CHEBI:18420"/>
    </cofactor>
    <text evidence="1">Binds 1 Mg(2+) ion per subunit.</text>
</comment>
<comment type="pathway">
    <text evidence="1">Carbohydrate metabolism; tricarboxylic acid cycle; succinate from succinyl-CoA (ligase route): step 1/1.</text>
</comment>
<comment type="subunit">
    <text evidence="1">Heterotetramer of two alpha and two beta subunits.</text>
</comment>
<comment type="similarity">
    <text evidence="1">Belongs to the succinate/malate CoA ligase beta subunit family.</text>
</comment>
<accession>B2HXG0</accession>